<dbReference type="EC" id="2.1.2.1" evidence="1"/>
<dbReference type="EMBL" id="FM204884">
    <property type="protein sequence ID" value="CAW99208.1"/>
    <property type="molecule type" value="Genomic_DNA"/>
</dbReference>
<dbReference type="SMR" id="C0MF11"/>
<dbReference type="KEGG" id="seq:SZO_09380"/>
<dbReference type="eggNOG" id="COG0112">
    <property type="taxonomic scope" value="Bacteria"/>
</dbReference>
<dbReference type="HOGENOM" id="CLU_022477_2_1_9"/>
<dbReference type="UniPathway" id="UPA00193"/>
<dbReference type="UniPathway" id="UPA00288">
    <property type="reaction ID" value="UER01023"/>
</dbReference>
<dbReference type="Proteomes" id="UP000001368">
    <property type="component" value="Chromosome"/>
</dbReference>
<dbReference type="GO" id="GO:0005829">
    <property type="term" value="C:cytosol"/>
    <property type="evidence" value="ECO:0007669"/>
    <property type="project" value="TreeGrafter"/>
</dbReference>
<dbReference type="GO" id="GO:0004372">
    <property type="term" value="F:glycine hydroxymethyltransferase activity"/>
    <property type="evidence" value="ECO:0007669"/>
    <property type="project" value="UniProtKB-UniRule"/>
</dbReference>
<dbReference type="GO" id="GO:0030170">
    <property type="term" value="F:pyridoxal phosphate binding"/>
    <property type="evidence" value="ECO:0007669"/>
    <property type="project" value="UniProtKB-UniRule"/>
</dbReference>
<dbReference type="GO" id="GO:0019264">
    <property type="term" value="P:glycine biosynthetic process from serine"/>
    <property type="evidence" value="ECO:0007669"/>
    <property type="project" value="UniProtKB-UniRule"/>
</dbReference>
<dbReference type="GO" id="GO:0035999">
    <property type="term" value="P:tetrahydrofolate interconversion"/>
    <property type="evidence" value="ECO:0007669"/>
    <property type="project" value="UniProtKB-UniRule"/>
</dbReference>
<dbReference type="CDD" id="cd00378">
    <property type="entry name" value="SHMT"/>
    <property type="match status" value="1"/>
</dbReference>
<dbReference type="FunFam" id="3.40.640.10:FF:000001">
    <property type="entry name" value="Serine hydroxymethyltransferase"/>
    <property type="match status" value="1"/>
</dbReference>
<dbReference type="Gene3D" id="3.90.1150.10">
    <property type="entry name" value="Aspartate Aminotransferase, domain 1"/>
    <property type="match status" value="1"/>
</dbReference>
<dbReference type="Gene3D" id="3.40.640.10">
    <property type="entry name" value="Type I PLP-dependent aspartate aminotransferase-like (Major domain)"/>
    <property type="match status" value="1"/>
</dbReference>
<dbReference type="HAMAP" id="MF_00051">
    <property type="entry name" value="SHMT"/>
    <property type="match status" value="1"/>
</dbReference>
<dbReference type="InterPro" id="IPR015424">
    <property type="entry name" value="PyrdxlP-dep_Trfase"/>
</dbReference>
<dbReference type="InterPro" id="IPR015421">
    <property type="entry name" value="PyrdxlP-dep_Trfase_major"/>
</dbReference>
<dbReference type="InterPro" id="IPR015422">
    <property type="entry name" value="PyrdxlP-dep_Trfase_small"/>
</dbReference>
<dbReference type="InterPro" id="IPR001085">
    <property type="entry name" value="Ser_HO-MeTrfase"/>
</dbReference>
<dbReference type="InterPro" id="IPR049943">
    <property type="entry name" value="Ser_HO-MeTrfase-like"/>
</dbReference>
<dbReference type="InterPro" id="IPR019798">
    <property type="entry name" value="Ser_HO-MeTrfase_PLP_BS"/>
</dbReference>
<dbReference type="InterPro" id="IPR039429">
    <property type="entry name" value="SHMT-like_dom"/>
</dbReference>
<dbReference type="NCBIfam" id="NF000586">
    <property type="entry name" value="PRK00011.1"/>
    <property type="match status" value="1"/>
</dbReference>
<dbReference type="PANTHER" id="PTHR11680">
    <property type="entry name" value="SERINE HYDROXYMETHYLTRANSFERASE"/>
    <property type="match status" value="1"/>
</dbReference>
<dbReference type="PANTHER" id="PTHR11680:SF35">
    <property type="entry name" value="SERINE HYDROXYMETHYLTRANSFERASE 1"/>
    <property type="match status" value="1"/>
</dbReference>
<dbReference type="Pfam" id="PF00464">
    <property type="entry name" value="SHMT"/>
    <property type="match status" value="1"/>
</dbReference>
<dbReference type="PIRSF" id="PIRSF000412">
    <property type="entry name" value="SHMT"/>
    <property type="match status" value="1"/>
</dbReference>
<dbReference type="SUPFAM" id="SSF53383">
    <property type="entry name" value="PLP-dependent transferases"/>
    <property type="match status" value="1"/>
</dbReference>
<dbReference type="PROSITE" id="PS00096">
    <property type="entry name" value="SHMT"/>
    <property type="match status" value="1"/>
</dbReference>
<gene>
    <name evidence="1" type="primary">glyA</name>
    <name type="ordered locus">SZO_09380</name>
</gene>
<comment type="function">
    <text evidence="1">Catalyzes the reversible interconversion of serine and glycine with tetrahydrofolate (THF) serving as the one-carbon carrier. This reaction serves as the major source of one-carbon groups required for the biosynthesis of purines, thymidylate, methionine, and other important biomolecules. Also exhibits THF-independent aldolase activity toward beta-hydroxyamino acids, producing glycine and aldehydes, via a retro-aldol mechanism.</text>
</comment>
<comment type="catalytic activity">
    <reaction evidence="1">
        <text>(6R)-5,10-methylene-5,6,7,8-tetrahydrofolate + glycine + H2O = (6S)-5,6,7,8-tetrahydrofolate + L-serine</text>
        <dbReference type="Rhea" id="RHEA:15481"/>
        <dbReference type="ChEBI" id="CHEBI:15377"/>
        <dbReference type="ChEBI" id="CHEBI:15636"/>
        <dbReference type="ChEBI" id="CHEBI:33384"/>
        <dbReference type="ChEBI" id="CHEBI:57305"/>
        <dbReference type="ChEBI" id="CHEBI:57453"/>
        <dbReference type="EC" id="2.1.2.1"/>
    </reaction>
</comment>
<comment type="cofactor">
    <cofactor evidence="1">
        <name>pyridoxal 5'-phosphate</name>
        <dbReference type="ChEBI" id="CHEBI:597326"/>
    </cofactor>
</comment>
<comment type="pathway">
    <text evidence="1">One-carbon metabolism; tetrahydrofolate interconversion.</text>
</comment>
<comment type="pathway">
    <text evidence="1">Amino-acid biosynthesis; glycine biosynthesis; glycine from L-serine: step 1/1.</text>
</comment>
<comment type="subunit">
    <text evidence="1">Homodimer.</text>
</comment>
<comment type="subcellular location">
    <subcellularLocation>
        <location evidence="1">Cytoplasm</location>
    </subcellularLocation>
</comment>
<comment type="similarity">
    <text evidence="1">Belongs to the SHMT family.</text>
</comment>
<feature type="chain" id="PRO_1000202270" description="Serine hydroxymethyltransferase">
    <location>
        <begin position="1"/>
        <end position="419"/>
    </location>
</feature>
<feature type="binding site" evidence="1">
    <location>
        <position position="121"/>
    </location>
    <ligand>
        <name>(6S)-5,6,7,8-tetrahydrofolate</name>
        <dbReference type="ChEBI" id="CHEBI:57453"/>
    </ligand>
</feature>
<feature type="binding site" evidence="1">
    <location>
        <begin position="125"/>
        <end position="127"/>
    </location>
    <ligand>
        <name>(6S)-5,6,7,8-tetrahydrofolate</name>
        <dbReference type="ChEBI" id="CHEBI:57453"/>
    </ligand>
</feature>
<feature type="binding site" evidence="1">
    <location>
        <begin position="355"/>
        <end position="357"/>
    </location>
    <ligand>
        <name>(6S)-5,6,7,8-tetrahydrofolate</name>
        <dbReference type="ChEBI" id="CHEBI:57453"/>
    </ligand>
</feature>
<feature type="site" description="Plays an important role in substrate specificity" evidence="1">
    <location>
        <position position="229"/>
    </location>
</feature>
<feature type="modified residue" description="N6-(pyridoxal phosphate)lysine" evidence="1">
    <location>
        <position position="230"/>
    </location>
</feature>
<accession>C0MF11</accession>
<sequence length="419" mass="45814">MMFNNENYKDYDQELWEAIQAEEDRQEHNIELIASENMVSKAVMQAQGSVLTNKYAEGYPSKRYYGGTEYVDIVESLAIERAKKLFGAAYANVQPHSGSQANAAAYMALINAGDTVLGMDLAAGGHLTHGSPVNFSGKTYQFVGYTVDKETEKLDYAAILKQAKAVQPKLIVAGASAYSRQIDFEQFRFIADQVGAYLMVDMAHIAGLVAAGLHQNPVPYAHIVTSTTHKTLRGPRGGLLLTNDEAIARKMNAAIFPGLQGGPLEHVIAAKAVAFKEALDPAFTDYARAVIANTAAMAEVFAKDDRFRLISGGTDNHLFLVDVTKVIENGKLAQALLDEVNITLNKNAIPFETLSPFKTSGIRIGCAAITSRGMGVDESRTIAHLIIKALVNHQQPEILEEVRYEVRRLTDAFPLYKKN</sequence>
<organism>
    <name type="scientific">Streptococcus equi subsp. zooepidemicus (strain H70)</name>
    <dbReference type="NCBI Taxonomy" id="553483"/>
    <lineage>
        <taxon>Bacteria</taxon>
        <taxon>Bacillati</taxon>
        <taxon>Bacillota</taxon>
        <taxon>Bacilli</taxon>
        <taxon>Lactobacillales</taxon>
        <taxon>Streptococcaceae</taxon>
        <taxon>Streptococcus</taxon>
    </lineage>
</organism>
<keyword id="KW-0028">Amino-acid biosynthesis</keyword>
<keyword id="KW-0963">Cytoplasm</keyword>
<keyword id="KW-0554">One-carbon metabolism</keyword>
<keyword id="KW-0663">Pyridoxal phosphate</keyword>
<keyword id="KW-0808">Transferase</keyword>
<name>GLYA_STRS7</name>
<evidence type="ECO:0000255" key="1">
    <source>
        <dbReference type="HAMAP-Rule" id="MF_00051"/>
    </source>
</evidence>
<protein>
    <recommendedName>
        <fullName evidence="1">Serine hydroxymethyltransferase</fullName>
        <shortName evidence="1">SHMT</shortName>
        <shortName evidence="1">Serine methylase</shortName>
        <ecNumber evidence="1">2.1.2.1</ecNumber>
    </recommendedName>
</protein>
<proteinExistence type="inferred from homology"/>
<reference key="1">
    <citation type="journal article" date="2009" name="PLoS Pathog.">
        <title>Genomic evidence for the evolution of Streptococcus equi: host restriction, increased virulence, and genetic exchange with human pathogens.</title>
        <authorList>
            <person name="Holden M.T.G."/>
            <person name="Heather Z."/>
            <person name="Paillot R."/>
            <person name="Steward K.F."/>
            <person name="Webb K."/>
            <person name="Ainslie F."/>
            <person name="Jourdan T."/>
            <person name="Bason N.C."/>
            <person name="Holroyd N.E."/>
            <person name="Mungall K."/>
            <person name="Quail M.A."/>
            <person name="Sanders M."/>
            <person name="Simmonds M."/>
            <person name="Willey D."/>
            <person name="Brooks K."/>
            <person name="Aanensen D.M."/>
            <person name="Spratt B.G."/>
            <person name="Jolley K.A."/>
            <person name="Maiden M.C.J."/>
            <person name="Kehoe M."/>
            <person name="Chanter N."/>
            <person name="Bentley S.D."/>
            <person name="Robinson C."/>
            <person name="Maskell D.J."/>
            <person name="Parkhill J."/>
            <person name="Waller A.S."/>
        </authorList>
    </citation>
    <scope>NUCLEOTIDE SEQUENCE [LARGE SCALE GENOMIC DNA]</scope>
    <source>
        <strain>H70</strain>
    </source>
</reference>